<keyword id="KW-0963">Cytoplasm</keyword>
<keyword id="KW-0903">Direct protein sequencing</keyword>
<keyword id="KW-0597">Phosphoprotein</keyword>
<keyword id="KW-0646">Protease inhibitor</keyword>
<keyword id="KW-0653">Protein transport</keyword>
<keyword id="KW-1185">Reference proteome</keyword>
<keyword id="KW-0722">Serine protease inhibitor</keyword>
<keyword id="KW-0813">Transport</keyword>
<accession>P0CT04</accession>
<accession>D6W1G3</accession>
<accession>P01095</accession>
<gene>
    <name type="primary">PBI2</name>
    <name type="ordered locus">YNL015W</name>
    <name type="ORF">N2844</name>
</gene>
<comment type="function">
    <text evidence="2 4 6 7 8">Cytosolic inhibitor of vacuolar proteinase B (yscB), probably regulating protease B activity during limited proteolysis. PBI2 is a component of the LMA1 complex, which is involved in the facilitation of vesicle fusion such as homotypic vacuole and ER-derived COPII vesicle fusion with the Golgi.</text>
</comment>
<comment type="subunit">
    <text evidence="6 8">Part of the heterodimeric LMA1 complex together with the thioredoxin II/TRX2. LMA1 binds to the ATPase SEC18.</text>
</comment>
<comment type="subcellular location">
    <subcellularLocation>
        <location evidence="1 3 7">Cytoplasm</location>
    </subcellularLocation>
</comment>
<comment type="miscellaneous">
    <text evidence="10">Originally, 2 inhibitors of protease B, inhibitor I(B)2 and inhibitor I(B)1, have been isolated from commercial baker's yeast, which consists of both S.cerevisiae and S.carlsbergensis. It has been shown that S.cerevisiae only produces inhibitor 2, and S.carlsbergensis only produces inhibitor 1 (PubMed:328499). A sequence for inhibitor 1 from S.carlsbergensis has been determined (AC P0CT05).</text>
</comment>
<comment type="similarity">
    <text evidence="9">Belongs to the protease inhibitor I9 family.</text>
</comment>
<organism>
    <name type="scientific">Saccharomyces cerevisiae (strain ATCC 204508 / S288c)</name>
    <name type="common">Baker's yeast</name>
    <dbReference type="NCBI Taxonomy" id="559292"/>
    <lineage>
        <taxon>Eukaryota</taxon>
        <taxon>Fungi</taxon>
        <taxon>Dikarya</taxon>
        <taxon>Ascomycota</taxon>
        <taxon>Saccharomycotina</taxon>
        <taxon>Saccharomycetes</taxon>
        <taxon>Saccharomycetales</taxon>
        <taxon>Saccharomycetaceae</taxon>
        <taxon>Saccharomyces</taxon>
    </lineage>
</organism>
<name>IPB2_YEAST</name>
<proteinExistence type="evidence at protein level"/>
<feature type="initiator methionine" description="Removed" evidence="5">
    <location>
        <position position="1"/>
    </location>
</feature>
<feature type="chain" id="PRO_0000212790" description="Protease B inhibitor 2">
    <location>
        <begin position="2"/>
        <end position="75"/>
    </location>
</feature>
<feature type="modified residue" description="Phosphothreonine" evidence="11 12">
    <location>
        <position position="74"/>
    </location>
</feature>
<feature type="sequence conflict" description="In Ref. 1; AA sequence." evidence="9" ref="1">
    <original>V</original>
    <variation>L</variation>
    <location>
        <position position="33"/>
    </location>
</feature>
<dbReference type="EMBL" id="X60051">
    <property type="protein sequence ID" value="CAA42651.1"/>
    <property type="molecule type" value="Genomic_DNA"/>
</dbReference>
<dbReference type="EMBL" id="Z71291">
    <property type="protein sequence ID" value="CAA95876.1"/>
    <property type="molecule type" value="Genomic_DNA"/>
</dbReference>
<dbReference type="EMBL" id="AY693217">
    <property type="protein sequence ID" value="AAT93236.1"/>
    <property type="molecule type" value="Genomic_DNA"/>
</dbReference>
<dbReference type="EMBL" id="BK006947">
    <property type="protein sequence ID" value="DAA10529.1"/>
    <property type="molecule type" value="Genomic_DNA"/>
</dbReference>
<dbReference type="PIR" id="S16882">
    <property type="entry name" value="YBBY2"/>
</dbReference>
<dbReference type="RefSeq" id="NP_014383.1">
    <property type="nucleotide sequence ID" value="NM_001182854.1"/>
</dbReference>
<dbReference type="SMR" id="P0CT04"/>
<dbReference type="BioGRID" id="35811">
    <property type="interactions" value="107"/>
</dbReference>
<dbReference type="ComplexPortal" id="CPX-1278">
    <property type="entry name" value="LMA1 complex, TRX1 variant"/>
</dbReference>
<dbReference type="ComplexPortal" id="CPX-1279">
    <property type="entry name" value="LMA1 complex, TRX2 variant"/>
</dbReference>
<dbReference type="FunCoup" id="P0CT04">
    <property type="interactions" value="249"/>
</dbReference>
<dbReference type="IntAct" id="P0CT04">
    <property type="interactions" value="37"/>
</dbReference>
<dbReference type="STRING" id="4932.YNL015W"/>
<dbReference type="MEROPS" id="I09.003"/>
<dbReference type="iPTMnet" id="P0CT04"/>
<dbReference type="PaxDb" id="4932-YNL015W"/>
<dbReference type="PeptideAtlas" id="P0CT04"/>
<dbReference type="EnsemblFungi" id="YNL015W_mRNA">
    <property type="protein sequence ID" value="YNL015W"/>
    <property type="gene ID" value="YNL015W"/>
</dbReference>
<dbReference type="GeneID" id="855717"/>
<dbReference type="KEGG" id="sce:YNL015W"/>
<dbReference type="AGR" id="SGD:S000004960"/>
<dbReference type="SGD" id="S000004960">
    <property type="gene designation" value="PBI2"/>
</dbReference>
<dbReference type="VEuPathDB" id="FungiDB:YNL015W"/>
<dbReference type="eggNOG" id="ENOG502SBW1">
    <property type="taxonomic scope" value="Eukaryota"/>
</dbReference>
<dbReference type="HOGENOM" id="CLU_156026_3_0_1"/>
<dbReference type="InParanoid" id="P0CT04"/>
<dbReference type="OMA" id="HNDNIAS"/>
<dbReference type="OrthoDB" id="5518345at2759"/>
<dbReference type="BioCyc" id="YEAST:MONOMER3O-39566"/>
<dbReference type="BioGRID-ORCS" id="855717">
    <property type="hits" value="8 hits in 10 CRISPR screens"/>
</dbReference>
<dbReference type="PRO" id="PR:P0CT04"/>
<dbReference type="Proteomes" id="UP000002311">
    <property type="component" value="Chromosome XIV"/>
</dbReference>
<dbReference type="RNAct" id="P0CT04">
    <property type="molecule type" value="protein"/>
</dbReference>
<dbReference type="GO" id="GO:0005737">
    <property type="term" value="C:cytoplasm"/>
    <property type="evidence" value="ECO:0007005"/>
    <property type="project" value="SGD"/>
</dbReference>
<dbReference type="GO" id="GO:0005829">
    <property type="term" value="C:cytosol"/>
    <property type="evidence" value="ECO:0000314"/>
    <property type="project" value="SGD"/>
</dbReference>
<dbReference type="GO" id="GO:0000324">
    <property type="term" value="C:fungal-type vacuole"/>
    <property type="evidence" value="ECO:0000303"/>
    <property type="project" value="ComplexPortal"/>
</dbReference>
<dbReference type="GO" id="GO:0120124">
    <property type="term" value="C:membrane fusion priming complex"/>
    <property type="evidence" value="ECO:0000303"/>
    <property type="project" value="ComplexPortal"/>
</dbReference>
<dbReference type="GO" id="GO:0005634">
    <property type="term" value="C:nucleus"/>
    <property type="evidence" value="ECO:0007005"/>
    <property type="project" value="SGD"/>
</dbReference>
<dbReference type="GO" id="GO:0004866">
    <property type="term" value="F:endopeptidase inhibitor activity"/>
    <property type="evidence" value="ECO:0000314"/>
    <property type="project" value="SGD"/>
</dbReference>
<dbReference type="GO" id="GO:0004867">
    <property type="term" value="F:serine-type endopeptidase inhibitor activity"/>
    <property type="evidence" value="ECO:0007669"/>
    <property type="project" value="UniProtKB-KW"/>
</dbReference>
<dbReference type="GO" id="GO:0015031">
    <property type="term" value="P:protein transport"/>
    <property type="evidence" value="ECO:0007669"/>
    <property type="project" value="UniProtKB-KW"/>
</dbReference>
<dbReference type="GO" id="GO:0030162">
    <property type="term" value="P:regulation of proteolysis"/>
    <property type="evidence" value="ECO:0000315"/>
    <property type="project" value="SGD"/>
</dbReference>
<dbReference type="GO" id="GO:0042144">
    <property type="term" value="P:vacuole fusion, non-autophagic"/>
    <property type="evidence" value="ECO:0000314"/>
    <property type="project" value="SGD"/>
</dbReference>
<dbReference type="FunFam" id="3.30.70.80:FF:000005">
    <property type="entry name" value="Proteinase inhibitor I2B"/>
    <property type="match status" value="1"/>
</dbReference>
<dbReference type="Gene3D" id="3.30.70.80">
    <property type="entry name" value="Peptidase S8 propeptide/proteinase inhibitor I9"/>
    <property type="match status" value="1"/>
</dbReference>
<dbReference type="InterPro" id="IPR052471">
    <property type="entry name" value="PBI_I9"/>
</dbReference>
<dbReference type="InterPro" id="IPR037045">
    <property type="entry name" value="S8pro/Inhibitor_I9_sf"/>
</dbReference>
<dbReference type="PANTHER" id="PTHR28288">
    <property type="entry name" value="PROTEASE B INHIBITOR 2"/>
    <property type="match status" value="1"/>
</dbReference>
<dbReference type="PANTHER" id="PTHR28288:SF2">
    <property type="entry name" value="PROTEASE B INHIBITOR 2"/>
    <property type="match status" value="1"/>
</dbReference>
<dbReference type="SUPFAM" id="SSF54897">
    <property type="entry name" value="Protease propeptides/inhibitors"/>
    <property type="match status" value="1"/>
</dbReference>
<evidence type="ECO:0000269" key="1">
    <source>
    </source>
</evidence>
<evidence type="ECO:0000269" key="2">
    <source>
    </source>
</evidence>
<evidence type="ECO:0000269" key="3">
    <source>
    </source>
</evidence>
<evidence type="ECO:0000269" key="4">
    <source>
    </source>
</evidence>
<evidence type="ECO:0000269" key="5">
    <source>
    </source>
</evidence>
<evidence type="ECO:0000269" key="6">
    <source>
    </source>
</evidence>
<evidence type="ECO:0000269" key="7">
    <source>
    </source>
</evidence>
<evidence type="ECO:0000269" key="8">
    <source>
    </source>
</evidence>
<evidence type="ECO:0000305" key="9"/>
<evidence type="ECO:0000305" key="10">
    <source>
    </source>
</evidence>
<evidence type="ECO:0007744" key="11">
    <source>
    </source>
</evidence>
<evidence type="ECO:0007744" key="12">
    <source>
    </source>
</evidence>
<reference key="1">
    <citation type="journal article" date="1979" name="J. Biol. Chem.">
        <title>Primary structure of yeast proteinase B inhibitor 2.</title>
        <authorList>
            <person name="Maier K."/>
            <person name="Mueller H."/>
            <person name="Tesch R."/>
            <person name="Trolp R."/>
            <person name="Witt I."/>
            <person name="Holzer H."/>
        </authorList>
    </citation>
    <scope>PROTEIN SEQUENCE OF 2-75</scope>
    <scope>CLEAVAGE OF INITIATOR METHIONINE</scope>
</reference>
<reference key="2">
    <citation type="journal article" date="1991" name="Eur. J. Biochem.">
        <title>The proteinase yscB inhibitor (PBI2) gene of yeast and studies on the function of its protein product.</title>
        <authorList>
            <person name="Schu P."/>
            <person name="Wolf D.H."/>
        </authorList>
    </citation>
    <scope>NUCLEOTIDE SEQUENCE [GENOMIC DNA]</scope>
    <scope>FUNCTION</scope>
    <source>
        <strain>ATCC 204508 / S288c</strain>
    </source>
</reference>
<reference key="3">
    <citation type="journal article" date="1997" name="Nature">
        <title>The nucleotide sequence of Saccharomyces cerevisiae chromosome XIV and its evolutionary implications.</title>
        <authorList>
            <person name="Philippsen P."/>
            <person name="Kleine K."/>
            <person name="Poehlmann R."/>
            <person name="Duesterhoeft A."/>
            <person name="Hamberg K."/>
            <person name="Hegemann J.H."/>
            <person name="Obermaier B."/>
            <person name="Urrestarazu L.A."/>
            <person name="Aert R."/>
            <person name="Albermann K."/>
            <person name="Altmann R."/>
            <person name="Andre B."/>
            <person name="Baladron V."/>
            <person name="Ballesta J.P.G."/>
            <person name="Becam A.-M."/>
            <person name="Beinhauer J.D."/>
            <person name="Boskovic J."/>
            <person name="Buitrago M.J."/>
            <person name="Bussereau F."/>
            <person name="Coster F."/>
            <person name="Crouzet M."/>
            <person name="D'Angelo M."/>
            <person name="Dal Pero F."/>
            <person name="De Antoni A."/>
            <person name="del Rey F."/>
            <person name="Doignon F."/>
            <person name="Domdey H."/>
            <person name="Dubois E."/>
            <person name="Fiedler T.A."/>
            <person name="Fleig U."/>
            <person name="Floeth M."/>
            <person name="Fritz C."/>
            <person name="Gaillardin C."/>
            <person name="Garcia-Cantalejo J.M."/>
            <person name="Glansdorff N."/>
            <person name="Goffeau A."/>
            <person name="Gueldener U."/>
            <person name="Herbert C.J."/>
            <person name="Heumann K."/>
            <person name="Heuss-Neitzel D."/>
            <person name="Hilbert H."/>
            <person name="Hinni K."/>
            <person name="Iraqui Houssaini I."/>
            <person name="Jacquet M."/>
            <person name="Jimenez A."/>
            <person name="Jonniaux J.-L."/>
            <person name="Karpfinger-Hartl L."/>
            <person name="Lanfranchi G."/>
            <person name="Lepingle A."/>
            <person name="Levesque H."/>
            <person name="Lyck R."/>
            <person name="Maftahi M."/>
            <person name="Mallet L."/>
            <person name="Maurer C.T.C."/>
            <person name="Messenguy F."/>
            <person name="Mewes H.-W."/>
            <person name="Moestl D."/>
            <person name="Nasr F."/>
            <person name="Nicaud J.-M."/>
            <person name="Niedenthal R.K."/>
            <person name="Pandolfo D."/>
            <person name="Pierard A."/>
            <person name="Piravandi E."/>
            <person name="Planta R.J."/>
            <person name="Pohl T.M."/>
            <person name="Purnelle B."/>
            <person name="Rebischung C."/>
            <person name="Remacha M.A."/>
            <person name="Revuelta J.L."/>
            <person name="Rinke M."/>
            <person name="Saiz J.E."/>
            <person name="Sartorello F."/>
            <person name="Scherens B."/>
            <person name="Sen-Gupta M."/>
            <person name="Soler-Mira A."/>
            <person name="Urbanus J.H.M."/>
            <person name="Valle G."/>
            <person name="Van Dyck L."/>
            <person name="Verhasselt P."/>
            <person name="Vierendeels F."/>
            <person name="Vissers S."/>
            <person name="Voet M."/>
            <person name="Volckaert G."/>
            <person name="Wach A."/>
            <person name="Wambutt R."/>
            <person name="Wedler H."/>
            <person name="Zollner A."/>
            <person name="Hani J."/>
        </authorList>
    </citation>
    <scope>NUCLEOTIDE SEQUENCE [LARGE SCALE GENOMIC DNA]</scope>
    <source>
        <strain>ATCC 204508 / S288c</strain>
    </source>
</reference>
<reference key="4">
    <citation type="journal article" date="2014" name="G3 (Bethesda)">
        <title>The reference genome sequence of Saccharomyces cerevisiae: Then and now.</title>
        <authorList>
            <person name="Engel S.R."/>
            <person name="Dietrich F.S."/>
            <person name="Fisk D.G."/>
            <person name="Binkley G."/>
            <person name="Balakrishnan R."/>
            <person name="Costanzo M.C."/>
            <person name="Dwight S.S."/>
            <person name="Hitz B.C."/>
            <person name="Karra K."/>
            <person name="Nash R.S."/>
            <person name="Weng S."/>
            <person name="Wong E.D."/>
            <person name="Lloyd P."/>
            <person name="Skrzypek M.S."/>
            <person name="Miyasato S.R."/>
            <person name="Simison M."/>
            <person name="Cherry J.M."/>
        </authorList>
    </citation>
    <scope>GENOME REANNOTATION</scope>
    <source>
        <strain>ATCC 204508 / S288c</strain>
    </source>
</reference>
<reference key="5">
    <citation type="journal article" date="2007" name="Genome Res.">
        <title>Approaching a complete repository of sequence-verified protein-encoding clones for Saccharomyces cerevisiae.</title>
        <authorList>
            <person name="Hu Y."/>
            <person name="Rolfs A."/>
            <person name="Bhullar B."/>
            <person name="Murthy T.V.S."/>
            <person name="Zhu C."/>
            <person name="Berger M.F."/>
            <person name="Camargo A.A."/>
            <person name="Kelley F."/>
            <person name="McCarron S."/>
            <person name="Jepson D."/>
            <person name="Richardson A."/>
            <person name="Raphael J."/>
            <person name="Moreira D."/>
            <person name="Taycher E."/>
            <person name="Zuo D."/>
            <person name="Mohr S."/>
            <person name="Kane M.F."/>
            <person name="Williamson J."/>
            <person name="Simpson A.J.G."/>
            <person name="Bulyk M.L."/>
            <person name="Harlow E."/>
            <person name="Marsischky G."/>
            <person name="Kolodner R.D."/>
            <person name="LaBaer J."/>
        </authorList>
    </citation>
    <scope>NUCLEOTIDE SEQUENCE [GENOMIC DNA] (INHIBITOR 2)</scope>
    <source>
        <strain>ATCC 204508 / S288c</strain>
    </source>
</reference>
<reference key="6">
    <citation type="journal article" date="1997" name="Proc. Natl. Acad. Sci. U.S.A.">
        <title>I2B is a small cytosolic protein that participates in vacuole fusion.</title>
        <authorList>
            <person name="Slusarewicz P."/>
            <person name="Xu Z."/>
            <person name="Seefeld K."/>
            <person name="Haas A."/>
            <person name="Wickner W.T."/>
        </authorList>
    </citation>
    <scope>PROTEIN SEQUENCE OF 42-54</scope>
    <scope>FUNCTION</scope>
    <scope>SUBCELLULAR LOCATION</scope>
    <source>
        <strain>K91-1A</strain>
    </source>
</reference>
<reference key="7">
    <citation type="journal article" date="1975" name="Biochim. Biophys. Acta">
        <title>Levels and turnover of the proteinase B inhibitors in yeast.</title>
        <authorList>
            <person name="Betz H."/>
        </authorList>
    </citation>
    <scope>ORIGIN OF SEQUENCE</scope>
    <scope>SUBCELLULAR LOCATION</scope>
    <source>
        <strain>ATCC 26109 / X2180 / NCYC 826</strain>
    </source>
</reference>
<reference key="8">
    <citation type="journal article" date="1977" name="J. Biol. Chem.">
        <title>Natural occurrence and chemical modification of proteinase B inhibitors from yeast.</title>
        <authorList>
            <person name="Buenning P."/>
            <person name="Holzer H."/>
        </authorList>
    </citation>
    <scope>ORIGIN OF SEQUENCE</scope>
    <source>
        <strain>ATCC 26109 / X2180 / NCYC 826</strain>
    </source>
</reference>
<reference key="9">
    <citation type="journal article" date="1997" name="J. Cell Biol.">
        <title>A heterodimer of thioredoxin and I(B)2 cooperates with Sec18p (NSF) to promote yeast vacuole inheritance.</title>
        <authorList>
            <person name="Xu Z."/>
            <person name="Mayer A."/>
            <person name="Muller E.G.D."/>
            <person name="Wickner W."/>
        </authorList>
    </citation>
    <scope>FUNCTION</scope>
    <scope>IDENTIFICATION IN THE LMA1 COMPLEX</scope>
</reference>
<reference key="10">
    <citation type="journal article" date="1998" name="Cell">
        <title>LMA1 binds to vacuoles at Sec18p (NSF), transfers upon ATP hydrolysis to a t-SNARE (Vam3p) complex, and is released during fusion.</title>
        <authorList>
            <person name="Xu Z."/>
            <person name="Sato K."/>
            <person name="Wickner W."/>
        </authorList>
    </citation>
    <scope>FUNCTION</scope>
    <scope>INTERACTION OF THE LMA1 COMPLEX WITH SEC18</scope>
</reference>
<reference key="11">
    <citation type="journal article" date="2003" name="Biochim. Biophys. Acta">
        <title>Involvement of LMA1 and GATE-16 family members in intracellular membrane dynamics.</title>
        <authorList>
            <person name="Elazar Z."/>
            <person name="Scherz-Shouval R."/>
            <person name="Shorer H."/>
        </authorList>
    </citation>
    <scope>REVIEW</scope>
    <scope>FUNCTION OF THE LMA1 COMPLEX IN VESICLE FUSION</scope>
</reference>
<reference key="12">
    <citation type="journal article" date="2003" name="Nature">
        <title>Global analysis of protein localization in budding yeast.</title>
        <authorList>
            <person name="Huh W.-K."/>
            <person name="Falvo J.V."/>
            <person name="Gerke L.C."/>
            <person name="Carroll A.S."/>
            <person name="Howson R.W."/>
            <person name="Weissman J.S."/>
            <person name="O'Shea E.K."/>
        </authorList>
    </citation>
    <scope>SUBCELLULAR LOCATION [LARGE SCALE ANALYSIS]</scope>
</reference>
<reference key="13">
    <citation type="journal article" date="2007" name="J. Proteome Res.">
        <title>Large-scale phosphorylation analysis of alpha-factor-arrested Saccharomyces cerevisiae.</title>
        <authorList>
            <person name="Li X."/>
            <person name="Gerber S.A."/>
            <person name="Rudner A.D."/>
            <person name="Beausoleil S.A."/>
            <person name="Haas W."/>
            <person name="Villen J."/>
            <person name="Elias J.E."/>
            <person name="Gygi S.P."/>
        </authorList>
    </citation>
    <scope>PHOSPHORYLATION [LARGE SCALE ANALYSIS] AT THR-74</scope>
    <scope>IDENTIFICATION BY MASS SPECTROMETRY [LARGE SCALE ANALYSIS]</scope>
    <source>
        <strain>ADR376</strain>
    </source>
</reference>
<reference key="14">
    <citation type="journal article" date="2009" name="Science">
        <title>Global analysis of Cdk1 substrate phosphorylation sites provides insights into evolution.</title>
        <authorList>
            <person name="Holt L.J."/>
            <person name="Tuch B.B."/>
            <person name="Villen J."/>
            <person name="Johnson A.D."/>
            <person name="Gygi S.P."/>
            <person name="Morgan D.O."/>
        </authorList>
    </citation>
    <scope>PHOSPHORYLATION [LARGE SCALE ANALYSIS] AT THR-74</scope>
    <scope>IDENTIFICATION BY MASS SPECTROMETRY [LARGE SCALE ANALYSIS]</scope>
</reference>
<protein>
    <recommendedName>
        <fullName>Protease B inhibitor 2</fullName>
    </recommendedName>
    <alternativeName>
        <fullName>Proteinase inhibitor I(B)2</fullName>
    </alternativeName>
</protein>
<sequence length="75" mass="8590">MTKNFIVTLKKNTPDVEAKKFLDSVHHAGGSIVHEFDIIKGYTIKVPDVLHLNKLKEKHNDVIENVEEDKEVHTN</sequence>